<name>PAND_SULDN</name>
<organism>
    <name type="scientific">Sulfurimonas denitrificans (strain ATCC 33889 / DSM 1251)</name>
    <name type="common">Thiomicrospira denitrificans (strain ATCC 33889 / DSM 1251)</name>
    <dbReference type="NCBI Taxonomy" id="326298"/>
    <lineage>
        <taxon>Bacteria</taxon>
        <taxon>Pseudomonadati</taxon>
        <taxon>Campylobacterota</taxon>
        <taxon>Epsilonproteobacteria</taxon>
        <taxon>Campylobacterales</taxon>
        <taxon>Sulfurimonadaceae</taxon>
        <taxon>Sulfurimonas</taxon>
    </lineage>
</organism>
<dbReference type="EC" id="4.1.1.11" evidence="1"/>
<dbReference type="EMBL" id="CP000153">
    <property type="protein sequence ID" value="ABB43615.1"/>
    <property type="molecule type" value="Genomic_DNA"/>
</dbReference>
<dbReference type="RefSeq" id="WP_011371969.1">
    <property type="nucleotide sequence ID" value="NC_007575.1"/>
</dbReference>
<dbReference type="SMR" id="Q30TR6"/>
<dbReference type="STRING" id="326298.Suden_0334"/>
<dbReference type="KEGG" id="tdn:Suden_0334"/>
<dbReference type="eggNOG" id="COG0853">
    <property type="taxonomic scope" value="Bacteria"/>
</dbReference>
<dbReference type="HOGENOM" id="CLU_115305_2_0_7"/>
<dbReference type="OrthoDB" id="9803983at2"/>
<dbReference type="UniPathway" id="UPA00028">
    <property type="reaction ID" value="UER00002"/>
</dbReference>
<dbReference type="Proteomes" id="UP000002714">
    <property type="component" value="Chromosome"/>
</dbReference>
<dbReference type="GO" id="GO:0005829">
    <property type="term" value="C:cytosol"/>
    <property type="evidence" value="ECO:0007669"/>
    <property type="project" value="TreeGrafter"/>
</dbReference>
<dbReference type="GO" id="GO:0004068">
    <property type="term" value="F:aspartate 1-decarboxylase activity"/>
    <property type="evidence" value="ECO:0007669"/>
    <property type="project" value="UniProtKB-UniRule"/>
</dbReference>
<dbReference type="GO" id="GO:0006523">
    <property type="term" value="P:alanine biosynthetic process"/>
    <property type="evidence" value="ECO:0007669"/>
    <property type="project" value="InterPro"/>
</dbReference>
<dbReference type="GO" id="GO:0015940">
    <property type="term" value="P:pantothenate biosynthetic process"/>
    <property type="evidence" value="ECO:0007669"/>
    <property type="project" value="UniProtKB-UniRule"/>
</dbReference>
<dbReference type="CDD" id="cd06919">
    <property type="entry name" value="Asp_decarbox"/>
    <property type="match status" value="1"/>
</dbReference>
<dbReference type="Gene3D" id="2.40.40.20">
    <property type="match status" value="1"/>
</dbReference>
<dbReference type="HAMAP" id="MF_00446">
    <property type="entry name" value="PanD"/>
    <property type="match status" value="1"/>
</dbReference>
<dbReference type="InterPro" id="IPR009010">
    <property type="entry name" value="Asp_de-COase-like_dom_sf"/>
</dbReference>
<dbReference type="InterPro" id="IPR003190">
    <property type="entry name" value="Asp_decarbox"/>
</dbReference>
<dbReference type="NCBIfam" id="TIGR00223">
    <property type="entry name" value="panD"/>
    <property type="match status" value="1"/>
</dbReference>
<dbReference type="PANTHER" id="PTHR21012">
    <property type="entry name" value="ASPARTATE 1-DECARBOXYLASE"/>
    <property type="match status" value="1"/>
</dbReference>
<dbReference type="PANTHER" id="PTHR21012:SF0">
    <property type="entry name" value="ASPARTATE 1-DECARBOXYLASE"/>
    <property type="match status" value="1"/>
</dbReference>
<dbReference type="Pfam" id="PF02261">
    <property type="entry name" value="Asp_decarbox"/>
    <property type="match status" value="1"/>
</dbReference>
<dbReference type="PIRSF" id="PIRSF006246">
    <property type="entry name" value="Asp_decarbox"/>
    <property type="match status" value="1"/>
</dbReference>
<dbReference type="SUPFAM" id="SSF50692">
    <property type="entry name" value="ADC-like"/>
    <property type="match status" value="1"/>
</dbReference>
<accession>Q30TR6</accession>
<sequence length="121" mass="13714">MTIEMLYSKIHRATVTDANLNYVGSITVDEELLEASMLRVGQKVEILNINNGERFSTYIILGERGKRDICLNGAAARKVHKGDKIIIVAYATYDEKELQNYKPRVVLVNDNNDIEEILESI</sequence>
<comment type="function">
    <text evidence="1">Catalyzes the pyruvoyl-dependent decarboxylation of aspartate to produce beta-alanine.</text>
</comment>
<comment type="catalytic activity">
    <reaction evidence="1">
        <text>L-aspartate + H(+) = beta-alanine + CO2</text>
        <dbReference type="Rhea" id="RHEA:19497"/>
        <dbReference type="ChEBI" id="CHEBI:15378"/>
        <dbReference type="ChEBI" id="CHEBI:16526"/>
        <dbReference type="ChEBI" id="CHEBI:29991"/>
        <dbReference type="ChEBI" id="CHEBI:57966"/>
        <dbReference type="EC" id="4.1.1.11"/>
    </reaction>
</comment>
<comment type="cofactor">
    <cofactor evidence="1">
        <name>pyruvate</name>
        <dbReference type="ChEBI" id="CHEBI:15361"/>
    </cofactor>
    <text evidence="1">Binds 1 pyruvoyl group covalently per subunit.</text>
</comment>
<comment type="pathway">
    <text evidence="1">Cofactor biosynthesis; (R)-pantothenate biosynthesis; beta-alanine from L-aspartate: step 1/1.</text>
</comment>
<comment type="subunit">
    <text evidence="1">Heterooctamer of four alpha and four beta subunits.</text>
</comment>
<comment type="subcellular location">
    <subcellularLocation>
        <location evidence="1">Cytoplasm</location>
    </subcellularLocation>
</comment>
<comment type="PTM">
    <text evidence="1">Is synthesized initially as an inactive proenzyme, which is activated by self-cleavage at a specific serine bond to produce a beta-subunit with a hydroxyl group at its C-terminus and an alpha-subunit with a pyruvoyl group at its N-terminus.</text>
</comment>
<comment type="similarity">
    <text evidence="1">Belongs to the PanD family.</text>
</comment>
<gene>
    <name evidence="1" type="primary">panD</name>
    <name type="ordered locus">Suden_0334</name>
</gene>
<protein>
    <recommendedName>
        <fullName evidence="1">Aspartate 1-decarboxylase</fullName>
        <ecNumber evidence="1">4.1.1.11</ecNumber>
    </recommendedName>
    <alternativeName>
        <fullName evidence="1">Aspartate alpha-decarboxylase</fullName>
    </alternativeName>
    <component>
        <recommendedName>
            <fullName evidence="1">Aspartate 1-decarboxylase beta chain</fullName>
        </recommendedName>
    </component>
    <component>
        <recommendedName>
            <fullName evidence="1">Aspartate 1-decarboxylase alpha chain</fullName>
        </recommendedName>
    </component>
</protein>
<feature type="chain" id="PRO_0000236911" description="Aspartate 1-decarboxylase beta chain" evidence="1">
    <location>
        <begin position="1"/>
        <end position="24"/>
    </location>
</feature>
<feature type="chain" id="PRO_0000236912" description="Aspartate 1-decarboxylase alpha chain" evidence="1">
    <location>
        <begin position="25"/>
        <end position="121"/>
    </location>
</feature>
<feature type="active site" description="Schiff-base intermediate with substrate; via pyruvic acid" evidence="1">
    <location>
        <position position="25"/>
    </location>
</feature>
<feature type="active site" description="Proton donor" evidence="1">
    <location>
        <position position="58"/>
    </location>
</feature>
<feature type="binding site" evidence="1">
    <location>
        <position position="57"/>
    </location>
    <ligand>
        <name>substrate</name>
    </ligand>
</feature>
<feature type="binding site" evidence="1">
    <location>
        <begin position="73"/>
        <end position="75"/>
    </location>
    <ligand>
        <name>substrate</name>
    </ligand>
</feature>
<feature type="modified residue" description="Pyruvic acid (Ser)" evidence="1">
    <location>
        <position position="25"/>
    </location>
</feature>
<evidence type="ECO:0000255" key="1">
    <source>
        <dbReference type="HAMAP-Rule" id="MF_00446"/>
    </source>
</evidence>
<reference key="1">
    <citation type="journal article" date="2008" name="Appl. Environ. Microbiol.">
        <title>Genome of the epsilonproteobacterial chemolithoautotroph Sulfurimonas denitrificans.</title>
        <authorList>
            <person name="Sievert S.M."/>
            <person name="Scott K.M."/>
            <person name="Klotz M.G."/>
            <person name="Chain P.S.G."/>
            <person name="Hauser L.J."/>
            <person name="Hemp J."/>
            <person name="Huegler M."/>
            <person name="Land M."/>
            <person name="Lapidus A."/>
            <person name="Larimer F.W."/>
            <person name="Lucas S."/>
            <person name="Malfatti S.A."/>
            <person name="Meyer F."/>
            <person name="Paulsen I.T."/>
            <person name="Ren Q."/>
            <person name="Simon J."/>
            <person name="Bailey K."/>
            <person name="Diaz E."/>
            <person name="Fitzpatrick K.A."/>
            <person name="Glover B."/>
            <person name="Gwatney N."/>
            <person name="Korajkic A."/>
            <person name="Long A."/>
            <person name="Mobberley J.M."/>
            <person name="Pantry S.N."/>
            <person name="Pazder G."/>
            <person name="Peterson S."/>
            <person name="Quintanilla J.D."/>
            <person name="Sprinkle R."/>
            <person name="Stephens J."/>
            <person name="Thomas P."/>
            <person name="Vaughn R."/>
            <person name="Weber M.J."/>
            <person name="Wooten L.L."/>
        </authorList>
    </citation>
    <scope>NUCLEOTIDE SEQUENCE [LARGE SCALE GENOMIC DNA]</scope>
    <source>
        <strain>ATCC 33889 / DSM 1251</strain>
    </source>
</reference>
<keyword id="KW-0068">Autocatalytic cleavage</keyword>
<keyword id="KW-0963">Cytoplasm</keyword>
<keyword id="KW-0210">Decarboxylase</keyword>
<keyword id="KW-0456">Lyase</keyword>
<keyword id="KW-0566">Pantothenate biosynthesis</keyword>
<keyword id="KW-0670">Pyruvate</keyword>
<keyword id="KW-1185">Reference proteome</keyword>
<keyword id="KW-0704">Schiff base</keyword>
<keyword id="KW-0865">Zymogen</keyword>
<proteinExistence type="inferred from homology"/>